<organism>
    <name type="scientific">Candida albicans (strain SC5314 / ATCC MYA-2876)</name>
    <name type="common">Yeast</name>
    <dbReference type="NCBI Taxonomy" id="237561"/>
    <lineage>
        <taxon>Eukaryota</taxon>
        <taxon>Fungi</taxon>
        <taxon>Dikarya</taxon>
        <taxon>Ascomycota</taxon>
        <taxon>Saccharomycotina</taxon>
        <taxon>Pichiomycetes</taxon>
        <taxon>Debaryomycetaceae</taxon>
        <taxon>Candida/Lodderomyces clade</taxon>
        <taxon>Candida</taxon>
    </lineage>
</organism>
<reference key="1">
    <citation type="journal article" date="2004" name="Proc. Natl. Acad. Sci. U.S.A.">
        <title>The diploid genome sequence of Candida albicans.</title>
        <authorList>
            <person name="Jones T."/>
            <person name="Federspiel N.A."/>
            <person name="Chibana H."/>
            <person name="Dungan J."/>
            <person name="Kalman S."/>
            <person name="Magee B.B."/>
            <person name="Newport G."/>
            <person name="Thorstenson Y.R."/>
            <person name="Agabian N."/>
            <person name="Magee P.T."/>
            <person name="Davis R.W."/>
            <person name="Scherer S."/>
        </authorList>
    </citation>
    <scope>NUCLEOTIDE SEQUENCE [LARGE SCALE GENOMIC DNA]</scope>
    <source>
        <strain>SC5314 / ATCC MYA-2876</strain>
    </source>
</reference>
<reference key="2">
    <citation type="journal article" date="2007" name="Genome Biol.">
        <title>Assembly of the Candida albicans genome into sixteen supercontigs aligned on the eight chromosomes.</title>
        <authorList>
            <person name="van het Hoog M."/>
            <person name="Rast T.J."/>
            <person name="Martchenko M."/>
            <person name="Grindle S."/>
            <person name="Dignard D."/>
            <person name="Hogues H."/>
            <person name="Cuomo C."/>
            <person name="Berriman M."/>
            <person name="Scherer S."/>
            <person name="Magee B.B."/>
            <person name="Whiteway M."/>
            <person name="Chibana H."/>
            <person name="Nantel A."/>
            <person name="Magee P.T."/>
        </authorList>
    </citation>
    <scope>GENOME REANNOTATION</scope>
    <source>
        <strain>SC5314 / ATCC MYA-2876</strain>
    </source>
</reference>
<reference key="3">
    <citation type="journal article" date="2013" name="Genome Biol.">
        <title>Assembly of a phased diploid Candida albicans genome facilitates allele-specific measurements and provides a simple model for repeat and indel structure.</title>
        <authorList>
            <person name="Muzzey D."/>
            <person name="Schwartz K."/>
            <person name="Weissman J.S."/>
            <person name="Sherlock G."/>
        </authorList>
    </citation>
    <scope>NUCLEOTIDE SEQUENCE [LARGE SCALE GENOMIC DNA]</scope>
    <scope>GENOME REANNOTATION</scope>
    <source>
        <strain>SC5314 / ATCC MYA-2876</strain>
    </source>
</reference>
<keyword id="KW-0007">Acetylation</keyword>
<keyword id="KW-0010">Activator</keyword>
<keyword id="KW-0156">Chromatin regulator</keyword>
<keyword id="KW-0158">Chromosome</keyword>
<keyword id="KW-0227">DNA damage</keyword>
<keyword id="KW-0234">DNA repair</keyword>
<keyword id="KW-0539">Nucleus</keyword>
<keyword id="KW-1185">Reference proteome</keyword>
<keyword id="KW-0804">Transcription</keyword>
<keyword id="KW-0805">Transcription regulation</keyword>
<keyword id="KW-0808">Transferase</keyword>
<dbReference type="EC" id="2.3.1.48" evidence="3"/>
<dbReference type="EC" id="2.3.1.-" evidence="2 3"/>
<dbReference type="EMBL" id="CP017625">
    <property type="protein sequence ID" value="AOW28099.1"/>
    <property type="molecule type" value="Genomic_DNA"/>
</dbReference>
<dbReference type="RefSeq" id="XP_717788.1">
    <property type="nucleotide sequence ID" value="XM_712695.1"/>
</dbReference>
<dbReference type="SMR" id="Q5A7Q2"/>
<dbReference type="BioGRID" id="1223612">
    <property type="interactions" value="1"/>
</dbReference>
<dbReference type="FunCoup" id="Q5A7Q2">
    <property type="interactions" value="1010"/>
</dbReference>
<dbReference type="STRING" id="237561.Q5A7Q2"/>
<dbReference type="EnsemblFungi" id="C3_00490W_A-T">
    <property type="protein sequence ID" value="C3_00490W_A-T-p1"/>
    <property type="gene ID" value="C3_00490W_A"/>
</dbReference>
<dbReference type="GeneID" id="3640518"/>
<dbReference type="KEGG" id="cal:CAALFM_C300490WA"/>
<dbReference type="CGD" id="CAL0000179231">
    <property type="gene designation" value="ESA1"/>
</dbReference>
<dbReference type="VEuPathDB" id="FungiDB:C3_00490W_A"/>
<dbReference type="eggNOG" id="KOG2747">
    <property type="taxonomic scope" value="Eukaryota"/>
</dbReference>
<dbReference type="HOGENOM" id="CLU_011815_2_0_1"/>
<dbReference type="InParanoid" id="Q5A7Q2"/>
<dbReference type="OMA" id="QYQRHGY"/>
<dbReference type="OrthoDB" id="787137at2759"/>
<dbReference type="PRO" id="PR:Q5A7Q2"/>
<dbReference type="Proteomes" id="UP000000559">
    <property type="component" value="Chromosome 3"/>
</dbReference>
<dbReference type="GO" id="GO:0000785">
    <property type="term" value="C:chromatin"/>
    <property type="evidence" value="ECO:0000318"/>
    <property type="project" value="GO_Central"/>
</dbReference>
<dbReference type="GO" id="GO:0035267">
    <property type="term" value="C:NuA4 histone acetyltransferase complex"/>
    <property type="evidence" value="ECO:0000314"/>
    <property type="project" value="CGD"/>
</dbReference>
<dbReference type="GO" id="GO:0000786">
    <property type="term" value="C:nucleosome"/>
    <property type="evidence" value="ECO:0007669"/>
    <property type="project" value="EnsemblFungi"/>
</dbReference>
<dbReference type="GO" id="GO:0005634">
    <property type="term" value="C:nucleus"/>
    <property type="evidence" value="ECO:0000318"/>
    <property type="project" value="GO_Central"/>
</dbReference>
<dbReference type="GO" id="GO:0032777">
    <property type="term" value="C:piccolo histone acetyltransferase complex"/>
    <property type="evidence" value="ECO:0007669"/>
    <property type="project" value="EnsemblFungi"/>
</dbReference>
<dbReference type="GO" id="GO:0003682">
    <property type="term" value="F:chromatin binding"/>
    <property type="evidence" value="ECO:0000318"/>
    <property type="project" value="GO_Central"/>
</dbReference>
<dbReference type="GO" id="GO:0004402">
    <property type="term" value="F:histone acetyltransferase activity"/>
    <property type="evidence" value="ECO:0000318"/>
    <property type="project" value="GO_Central"/>
</dbReference>
<dbReference type="GO" id="GO:0140068">
    <property type="term" value="F:histone crotonyltransferase activity"/>
    <property type="evidence" value="ECO:0007669"/>
    <property type="project" value="EnsemblFungi"/>
</dbReference>
<dbReference type="GO" id="GO:0043997">
    <property type="term" value="F:histone H4K12 acetyltransferase activity"/>
    <property type="evidence" value="ECO:0000315"/>
    <property type="project" value="CGD"/>
</dbReference>
<dbReference type="GO" id="GO:0046972">
    <property type="term" value="F:histone H4K16 acetyltransferase activity"/>
    <property type="evidence" value="ECO:0000315"/>
    <property type="project" value="CGD"/>
</dbReference>
<dbReference type="GO" id="GO:0043995">
    <property type="term" value="F:histone H4K5 acetyltransferase activity"/>
    <property type="evidence" value="ECO:0000315"/>
    <property type="project" value="CGD"/>
</dbReference>
<dbReference type="GO" id="GO:0106226">
    <property type="term" value="F:peptide 2-hydroxyisobutyryltransferase activity"/>
    <property type="evidence" value="ECO:0007669"/>
    <property type="project" value="RHEA"/>
</dbReference>
<dbReference type="GO" id="GO:0003712">
    <property type="term" value="F:transcription coregulator activity"/>
    <property type="evidence" value="ECO:0000318"/>
    <property type="project" value="GO_Central"/>
</dbReference>
<dbReference type="GO" id="GO:0033554">
    <property type="term" value="P:cellular response to stress"/>
    <property type="evidence" value="ECO:0000315"/>
    <property type="project" value="CGD"/>
</dbReference>
<dbReference type="GO" id="GO:0006281">
    <property type="term" value="P:DNA repair"/>
    <property type="evidence" value="ECO:0007669"/>
    <property type="project" value="UniProtKB-KW"/>
</dbReference>
<dbReference type="GO" id="GO:0006354">
    <property type="term" value="P:DNA-templated transcription elongation"/>
    <property type="evidence" value="ECO:0007669"/>
    <property type="project" value="EnsemblFungi"/>
</dbReference>
<dbReference type="GO" id="GO:0044182">
    <property type="term" value="P:filamentous growth of a population of unicellular organisms"/>
    <property type="evidence" value="ECO:0000315"/>
    <property type="project" value="CGD"/>
</dbReference>
<dbReference type="GO" id="GO:0016239">
    <property type="term" value="P:positive regulation of macroautophagy"/>
    <property type="evidence" value="ECO:0007669"/>
    <property type="project" value="EnsemblFungi"/>
</dbReference>
<dbReference type="GO" id="GO:0032968">
    <property type="term" value="P:positive regulation of transcription elongation by RNA polymerase II"/>
    <property type="evidence" value="ECO:0007669"/>
    <property type="project" value="EnsemblFungi"/>
</dbReference>
<dbReference type="GO" id="GO:0010867">
    <property type="term" value="P:positive regulation of triglyceride biosynthetic process"/>
    <property type="evidence" value="ECO:0007669"/>
    <property type="project" value="EnsemblFungi"/>
</dbReference>
<dbReference type="GO" id="GO:0000183">
    <property type="term" value="P:rDNA heterochromatin formation"/>
    <property type="evidence" value="ECO:0007669"/>
    <property type="project" value="EnsemblFungi"/>
</dbReference>
<dbReference type="GO" id="GO:0051726">
    <property type="term" value="P:regulation of cell cycle"/>
    <property type="evidence" value="ECO:0007669"/>
    <property type="project" value="EnsemblFungi"/>
</dbReference>
<dbReference type="GO" id="GO:0006357">
    <property type="term" value="P:regulation of transcription by RNA polymerase II"/>
    <property type="evidence" value="ECO:0000315"/>
    <property type="project" value="CGD"/>
</dbReference>
<dbReference type="FunFam" id="1.10.10.10:FF:000526">
    <property type="entry name" value="Histone acetyltransferase"/>
    <property type="match status" value="1"/>
</dbReference>
<dbReference type="FunFam" id="2.30.30.140:FF:000013">
    <property type="entry name" value="Histone acetyltransferase"/>
    <property type="match status" value="1"/>
</dbReference>
<dbReference type="FunFam" id="3.30.60.60:FF:000009">
    <property type="entry name" value="Histone acetyltransferase"/>
    <property type="match status" value="1"/>
</dbReference>
<dbReference type="FunFam" id="3.40.630.30:FF:000094">
    <property type="entry name" value="Histone acetyltransferase"/>
    <property type="match status" value="1"/>
</dbReference>
<dbReference type="Gene3D" id="2.30.30.140">
    <property type="match status" value="1"/>
</dbReference>
<dbReference type="Gene3D" id="3.40.630.30">
    <property type="match status" value="1"/>
</dbReference>
<dbReference type="Gene3D" id="3.30.60.60">
    <property type="entry name" value="N-acetyl transferase-like"/>
    <property type="match status" value="1"/>
</dbReference>
<dbReference type="Gene3D" id="1.10.10.10">
    <property type="entry name" value="Winged helix-like DNA-binding domain superfamily/Winged helix DNA-binding domain"/>
    <property type="match status" value="1"/>
</dbReference>
<dbReference type="InterPro" id="IPR016181">
    <property type="entry name" value="Acyl_CoA_acyltransferase"/>
</dbReference>
<dbReference type="InterPro" id="IPR016197">
    <property type="entry name" value="Chromo-like_dom_sf"/>
</dbReference>
<dbReference type="InterPro" id="IPR000953">
    <property type="entry name" value="Chromo/chromo_shadow_dom"/>
</dbReference>
<dbReference type="InterPro" id="IPR002717">
    <property type="entry name" value="HAT_MYST-type"/>
</dbReference>
<dbReference type="InterPro" id="IPR050603">
    <property type="entry name" value="MYST_HAT"/>
</dbReference>
<dbReference type="InterPro" id="IPR025995">
    <property type="entry name" value="Tudor-knot"/>
</dbReference>
<dbReference type="InterPro" id="IPR036388">
    <property type="entry name" value="WH-like_DNA-bd_sf"/>
</dbReference>
<dbReference type="InterPro" id="IPR040706">
    <property type="entry name" value="Zf-MYST"/>
</dbReference>
<dbReference type="PANTHER" id="PTHR10615">
    <property type="entry name" value="HISTONE ACETYLTRANSFERASE"/>
    <property type="match status" value="1"/>
</dbReference>
<dbReference type="PANTHER" id="PTHR10615:SF218">
    <property type="entry name" value="HISTONE ACETYLTRANSFERASE ESA1"/>
    <property type="match status" value="1"/>
</dbReference>
<dbReference type="Pfam" id="PF01853">
    <property type="entry name" value="MOZ_SAS"/>
    <property type="match status" value="1"/>
</dbReference>
<dbReference type="Pfam" id="PF11717">
    <property type="entry name" value="Tudor-knot"/>
    <property type="match status" value="1"/>
</dbReference>
<dbReference type="Pfam" id="PF17772">
    <property type="entry name" value="zf-MYST"/>
    <property type="match status" value="1"/>
</dbReference>
<dbReference type="SMART" id="SM00298">
    <property type="entry name" value="CHROMO"/>
    <property type="match status" value="1"/>
</dbReference>
<dbReference type="SUPFAM" id="SSF55729">
    <property type="entry name" value="Acyl-CoA N-acyltransferases (Nat)"/>
    <property type="match status" value="1"/>
</dbReference>
<dbReference type="SUPFAM" id="SSF54160">
    <property type="entry name" value="Chromo domain-like"/>
    <property type="match status" value="1"/>
</dbReference>
<dbReference type="PROSITE" id="PS51726">
    <property type="entry name" value="MYST_HAT"/>
    <property type="match status" value="1"/>
</dbReference>
<accession>Q5A7Q2</accession>
<accession>A0A1D8PIY0</accession>
<gene>
    <name type="primary">ESA1</name>
    <name type="ordered locus">CAALFM_C300490WA</name>
    <name type="ORF">CaO19.12871</name>
    <name type="ORF">CaO19.5416</name>
</gene>
<evidence type="ECO:0000250" key="1"/>
<evidence type="ECO:0000250" key="2">
    <source>
        <dbReference type="UniProtKB" id="O94446"/>
    </source>
</evidence>
<evidence type="ECO:0000250" key="3">
    <source>
        <dbReference type="UniProtKB" id="Q08649"/>
    </source>
</evidence>
<evidence type="ECO:0000255" key="4"/>
<evidence type="ECO:0000255" key="5">
    <source>
        <dbReference type="PROSITE-ProRule" id="PRU01063"/>
    </source>
</evidence>
<evidence type="ECO:0000256" key="6">
    <source>
        <dbReference type="SAM" id="MobiDB-lite"/>
    </source>
</evidence>
<evidence type="ECO:0000305" key="7"/>
<feature type="chain" id="PRO_0000051553" description="Histone acetyltransferase ESA1">
    <location>
        <begin position="1"/>
        <end position="541"/>
    </location>
</feature>
<feature type="domain" description="Tudor-knot" evidence="4">
    <location>
        <begin position="47"/>
        <end position="97"/>
    </location>
</feature>
<feature type="domain" description="MYST-type HAT" evidence="5">
    <location>
        <begin position="196"/>
        <end position="529"/>
    </location>
</feature>
<feature type="zinc finger region" description="C2HC MYST-type; degenerate" evidence="5">
    <location>
        <begin position="229"/>
        <end position="254"/>
    </location>
</feature>
<feature type="region of interest" description="Disordered" evidence="6">
    <location>
        <begin position="1"/>
        <end position="31"/>
    </location>
</feature>
<feature type="region of interest" description="Disordered" evidence="6">
    <location>
        <begin position="111"/>
        <end position="154"/>
    </location>
</feature>
<feature type="region of interest" description="Disordered" evidence="6">
    <location>
        <begin position="413"/>
        <end position="438"/>
    </location>
</feature>
<feature type="short sequence motif" description="ESA1-RPD3 motif" evidence="1">
    <location>
        <begin position="279"/>
        <end position="300"/>
    </location>
</feature>
<feature type="compositionally biased region" description="Basic and acidic residues" evidence="6">
    <location>
        <begin position="1"/>
        <end position="11"/>
    </location>
</feature>
<feature type="compositionally biased region" description="Polar residues" evidence="6">
    <location>
        <begin position="12"/>
        <end position="30"/>
    </location>
</feature>
<feature type="compositionally biased region" description="Basic residues" evidence="6">
    <location>
        <begin position="115"/>
        <end position="124"/>
    </location>
</feature>
<feature type="compositionally biased region" description="Polar residues" evidence="6">
    <location>
        <begin position="131"/>
        <end position="146"/>
    </location>
</feature>
<feature type="active site" description="Proton donor/acceptor" evidence="3">
    <location>
        <position position="372"/>
    </location>
</feature>
<feature type="binding site" evidence="3">
    <location>
        <begin position="337"/>
        <end position="341"/>
    </location>
    <ligand>
        <name>acetyl-CoA</name>
        <dbReference type="ChEBI" id="CHEBI:57288"/>
    </ligand>
</feature>
<feature type="binding site" evidence="3">
    <location>
        <begin position="346"/>
        <end position="352"/>
    </location>
    <ligand>
        <name>acetyl-CoA</name>
        <dbReference type="ChEBI" id="CHEBI:57288"/>
    </ligand>
</feature>
<feature type="binding site" evidence="3">
    <location>
        <position position="376"/>
    </location>
    <ligand>
        <name>acetyl-CoA</name>
        <dbReference type="ChEBI" id="CHEBI:57288"/>
    </ligand>
</feature>
<feature type="site" description="Important for catalytic activity" evidence="3">
    <location>
        <position position="338"/>
    </location>
</feature>
<feature type="modified residue" description="N6-acetyllysine; by autocatalysis" evidence="3">
    <location>
        <position position="296"/>
    </location>
</feature>
<name>ESA1_CANAL</name>
<protein>
    <recommendedName>
        <fullName>Histone acetyltransferase ESA1</fullName>
        <ecNumber evidence="3">2.3.1.48</ecNumber>
    </recommendedName>
    <alternativeName>
        <fullName evidence="7">Protein 2-hydroxyisobutyryltransferase ESA1</fullName>
        <ecNumber evidence="2">2.3.1.-</ecNumber>
    </alternativeName>
    <alternativeName>
        <fullName evidence="7">Protein acetyltransferase ESA1</fullName>
        <ecNumber evidence="3">2.3.1.-</ecNumber>
    </alternativeName>
    <alternativeName>
        <fullName evidence="7">Protein crotonyltransferase ESA1</fullName>
        <ecNumber evidence="3">2.3.1.-</ecNumber>
    </alternativeName>
</protein>
<comment type="function">
    <text evidence="2 3">Catalytic component of the NuA4 histone acetyltransferase (HAT) complex which is involved in epigenetic transcriptional activation of selected genes principally by acetylation of nucleosomal histones H4, H3, H2B, H2A and H2A variant H2A.Z (By similarity). Acetylates histone H4 to form H4K5ac, H4K8ac, H4K12ac and H4K16ac, histone H3 to form H3K14ac, and histone H2A to form H2AK4ac and H2AK7ac (By similarity). The NuA4 complex is involved in the DNA damage response and is required for chromosome segregation. The NuA4 complex plays a direct role in repair of DNA double-strand breaks (DSBs) through homologous recombination (By similarity). Recruitment to promoters depends on H3K4me. Also acetylates non-histone proteins (By similarity). In addition to protein acetyltransferase, can use different acyl-CoA substrates, such as 2-hydroxyisobutanoyl-CoA (2-hydroxyisobutyryl-CoA) or (2E)-butenoyl-CoA (crotonyl-CoA), and is able to mediate protein 2-hydroxyisobutyrylation and crotonylation, respectively (By similarity).</text>
</comment>
<comment type="catalytic activity">
    <reaction evidence="2">
        <text>L-lysyl-[histone] + acetyl-CoA = N(6)-acetyl-L-lysyl-[histone] + CoA + H(+)</text>
        <dbReference type="Rhea" id="RHEA:21992"/>
        <dbReference type="Rhea" id="RHEA-COMP:9845"/>
        <dbReference type="Rhea" id="RHEA-COMP:11338"/>
        <dbReference type="ChEBI" id="CHEBI:15378"/>
        <dbReference type="ChEBI" id="CHEBI:29969"/>
        <dbReference type="ChEBI" id="CHEBI:57287"/>
        <dbReference type="ChEBI" id="CHEBI:57288"/>
        <dbReference type="ChEBI" id="CHEBI:61930"/>
        <dbReference type="EC" id="2.3.1.48"/>
    </reaction>
    <physiologicalReaction direction="left-to-right" evidence="2">
        <dbReference type="Rhea" id="RHEA:21993"/>
    </physiologicalReaction>
</comment>
<comment type="catalytic activity">
    <reaction evidence="3">
        <text>L-lysyl-[protein] + acetyl-CoA = N(6)-acetyl-L-lysyl-[protein] + CoA + H(+)</text>
        <dbReference type="Rhea" id="RHEA:45948"/>
        <dbReference type="Rhea" id="RHEA-COMP:9752"/>
        <dbReference type="Rhea" id="RHEA-COMP:10731"/>
        <dbReference type="ChEBI" id="CHEBI:15378"/>
        <dbReference type="ChEBI" id="CHEBI:29969"/>
        <dbReference type="ChEBI" id="CHEBI:57287"/>
        <dbReference type="ChEBI" id="CHEBI:57288"/>
        <dbReference type="ChEBI" id="CHEBI:61930"/>
    </reaction>
    <physiologicalReaction direction="left-to-right" evidence="3">
        <dbReference type="Rhea" id="RHEA:45949"/>
    </physiologicalReaction>
</comment>
<comment type="catalytic activity">
    <reaction evidence="2">
        <text>2-hydroxyisobutanoyl-CoA + L-lysyl-[protein] = N(6)-(2-hydroxyisobutanoyl)-L-lysyl-[protein] + CoA + H(+)</text>
        <dbReference type="Rhea" id="RHEA:24180"/>
        <dbReference type="Rhea" id="RHEA-COMP:9752"/>
        <dbReference type="Rhea" id="RHEA-COMP:15921"/>
        <dbReference type="ChEBI" id="CHEBI:15378"/>
        <dbReference type="ChEBI" id="CHEBI:29969"/>
        <dbReference type="ChEBI" id="CHEBI:57287"/>
        <dbReference type="ChEBI" id="CHEBI:131780"/>
        <dbReference type="ChEBI" id="CHEBI:144968"/>
    </reaction>
    <physiologicalReaction direction="left-to-right" evidence="2">
        <dbReference type="Rhea" id="RHEA:24181"/>
    </physiologicalReaction>
</comment>
<comment type="catalytic activity">
    <reaction evidence="3">
        <text>(2E)-butenoyl-CoA + L-lysyl-[protein] = N(6)-(2E)-butenoyl-L-lysyl-[protein] + CoA + H(+)</text>
        <dbReference type="Rhea" id="RHEA:53908"/>
        <dbReference type="Rhea" id="RHEA-COMP:9752"/>
        <dbReference type="Rhea" id="RHEA-COMP:13707"/>
        <dbReference type="ChEBI" id="CHEBI:15378"/>
        <dbReference type="ChEBI" id="CHEBI:29969"/>
        <dbReference type="ChEBI" id="CHEBI:57287"/>
        <dbReference type="ChEBI" id="CHEBI:57332"/>
        <dbReference type="ChEBI" id="CHEBI:137954"/>
    </reaction>
    <physiologicalReaction direction="left-to-right" evidence="3">
        <dbReference type="Rhea" id="RHEA:53909"/>
    </physiologicalReaction>
</comment>
<comment type="subunit">
    <text evidence="3">Component of the NuA4 histone acetyltransferase complex.</text>
</comment>
<comment type="subcellular location">
    <subcellularLocation>
        <location evidence="2">Nucleus</location>
    </subcellularLocation>
    <subcellularLocation>
        <location evidence="2">Chromosome</location>
    </subcellularLocation>
    <text evidence="2">Following DNA damage, localizes to sites of DNA damage, such as double stand breaks (DSBs).</text>
</comment>
<comment type="domain">
    <text evidence="3">The ESA1-RPD3 motif is common to ESA1 and RPD3 and is required for ESA1 histone acetyl-transferase (HAT) activity and RPD3 histone deacetylase (HDAC) activity.</text>
</comment>
<comment type="PTM">
    <text evidence="3">Autoacetylation at Lys-296 is required for proper function.</text>
</comment>
<comment type="similarity">
    <text evidence="7">Belongs to the MYST (SAS/MOZ) family.</text>
</comment>
<proteinExistence type="inferred from homology"/>
<sequence length="541" mass="61922">MAVAEIKKEKGSSLSPEPSSPIQILSTEPDANTDIKQEKFTPKDILPGCKVHVSKDGEFRLAEILQEHIKKGRKVFYVHYQDFNKRLDEWIELDRIDFTRSLILPEIKADTKENKSKKKSKSKGQTKLSKNNTTANSTTGTPQPSDGQPIMGDDEMDLENLNVQGLKRPGEEFSREDEIKKLRTSGSMTQNHSEVARVRNLSTIILGEHIIEPWYFSPYPIELTEEDEIYICDFTLSYFGSKKQFERFRSKCSMKHPPGNEIYRDSKVSFWEIDGRKQRTWCRNLCLLSKLFLDHKTLYYDVDPFLFYIMTIKSDQGHHVVGYFSKEKESADGYNVACILTLPCYQKRGFGKLLIQFSYMLTKVERKVGSPEKPLSDLGLLSYRAYWTDTLVKLLVERNSPALFRKNNSQLEYDEAENGKDSSATPTPGPGSNASQSSILASAAASRSGLNSSPIFSNEITIEDISSITCMTTTDILHTLTTLQMLRYYKGQHIIVLTDQIMELYEKLVKKVKEKKKHELNPKLLHWTPPSFTANQLRFGW</sequence>